<comment type="function">
    <text evidence="1">Usually encoded in the trnK tRNA gene intron. Probably assists in splicing its own and other chloroplast group II introns.</text>
</comment>
<comment type="subcellular location">
    <subcellularLocation>
        <location>Plastid</location>
        <location>Chloroplast</location>
    </subcellularLocation>
</comment>
<comment type="similarity">
    <text evidence="1">Belongs to the intron maturase 2 family. MatK subfamily.</text>
</comment>
<accession>Q7JF34</accession>
<sequence length="503" mass="59680">MEEFQGYLELYRSQQHDFLYPLIFREYIYALAHDRGLNRSVLLDNVGYDKKSSLLIIKRLISRMYQQNHFIISVNDSNQNKFFGYNKNLYSQMISEGFAVIVEIPFSLRLVSSLEETETVKSYNLRSIHSIFPFFEDKFPHLNYASDVLIPYPIHLEILVQTLRYCVKDPSSLHLLRLFLHEYYNWNTLITPKKSIFAKSNQRLFLLLYNSYVCEYESILLFLRNQSNHLRLTSSGILFERIRFYEKIKYPVEEVFANDFPATLWFFKDPFIQYVRYQGKSILASKDTPLLMNKWKYYLVHFWQCHFYVWSQPGRIHINQLSKHSFDFLGYLSSIRPNISVVRSQLLENSFLMDNAMKKLDTLFPIIPMIGSLAKVKFCNTSGHPISKSSWADSSDSDIIDRFVRIGGNLSHYYSGSSKKKSLYRIKYILRLSCVKTLARKHKSTVRTFLKRLGPKLLDEFFTEEEQIFSLLFPRTSSTLKRFYRGRIWYLDILCINDLVNHE</sequence>
<gene>
    <name evidence="1" type="primary">matK</name>
</gene>
<geneLocation type="chloroplast"/>
<evidence type="ECO:0000255" key="1">
    <source>
        <dbReference type="HAMAP-Rule" id="MF_01390"/>
    </source>
</evidence>
<keyword id="KW-0150">Chloroplast</keyword>
<keyword id="KW-0507">mRNA processing</keyword>
<keyword id="KW-0934">Plastid</keyword>
<keyword id="KW-0694">RNA-binding</keyword>
<keyword id="KW-0819">tRNA processing</keyword>
<proteinExistence type="inferred from homology"/>
<protein>
    <recommendedName>
        <fullName evidence="1">Maturase K</fullName>
    </recommendedName>
    <alternativeName>
        <fullName evidence="1">Intron maturase</fullName>
    </alternativeName>
</protein>
<dbReference type="EMBL" id="AB011980">
    <property type="protein sequence ID" value="BAA32755.1"/>
    <property type="molecule type" value="Genomic_DNA"/>
</dbReference>
<dbReference type="RefSeq" id="YP_009763700.1">
    <property type="nucleotide sequence ID" value="NC_047295.1"/>
</dbReference>
<dbReference type="GeneID" id="54622205"/>
<dbReference type="GO" id="GO:0009507">
    <property type="term" value="C:chloroplast"/>
    <property type="evidence" value="ECO:0007669"/>
    <property type="project" value="UniProtKB-SubCell"/>
</dbReference>
<dbReference type="GO" id="GO:0003723">
    <property type="term" value="F:RNA binding"/>
    <property type="evidence" value="ECO:0007669"/>
    <property type="project" value="UniProtKB-KW"/>
</dbReference>
<dbReference type="GO" id="GO:0006397">
    <property type="term" value="P:mRNA processing"/>
    <property type="evidence" value="ECO:0007669"/>
    <property type="project" value="UniProtKB-KW"/>
</dbReference>
<dbReference type="GO" id="GO:0008380">
    <property type="term" value="P:RNA splicing"/>
    <property type="evidence" value="ECO:0007669"/>
    <property type="project" value="UniProtKB-UniRule"/>
</dbReference>
<dbReference type="GO" id="GO:0008033">
    <property type="term" value="P:tRNA processing"/>
    <property type="evidence" value="ECO:0007669"/>
    <property type="project" value="UniProtKB-KW"/>
</dbReference>
<dbReference type="HAMAP" id="MF_01390">
    <property type="entry name" value="MatK"/>
    <property type="match status" value="1"/>
</dbReference>
<dbReference type="InterPro" id="IPR024937">
    <property type="entry name" value="Domain_X"/>
</dbReference>
<dbReference type="InterPro" id="IPR002866">
    <property type="entry name" value="Maturase_MatK"/>
</dbReference>
<dbReference type="InterPro" id="IPR024942">
    <property type="entry name" value="Maturase_MatK_N"/>
</dbReference>
<dbReference type="PANTHER" id="PTHR34811">
    <property type="entry name" value="MATURASE K"/>
    <property type="match status" value="1"/>
</dbReference>
<dbReference type="PANTHER" id="PTHR34811:SF1">
    <property type="entry name" value="MATURASE K"/>
    <property type="match status" value="1"/>
</dbReference>
<dbReference type="Pfam" id="PF01348">
    <property type="entry name" value="Intron_maturas2"/>
    <property type="match status" value="1"/>
</dbReference>
<dbReference type="Pfam" id="PF01824">
    <property type="entry name" value="MatK_N"/>
    <property type="match status" value="1"/>
</dbReference>
<name>MATK_ROSCN</name>
<feature type="chain" id="PRO_0000143686" description="Maturase K">
    <location>
        <begin position="1"/>
        <end position="503"/>
    </location>
</feature>
<reference key="1">
    <citation type="journal article" date="1998" name="Sci. Hortic.">
        <title>Phylogenetic analyses of the genus Rosa using the matK sequence: molecular evidence for the narrow genetic background of modern roses.</title>
        <authorList>
            <person name="Matsumoto S."/>
            <person name="Kouchi M."/>
            <person name="Yabuki J."/>
            <person name="Kusunoki M."/>
            <person name="Ueda Y."/>
            <person name="Fukui H."/>
        </authorList>
    </citation>
    <scope>NUCLEOTIDE SEQUENCE [GENOMIC DNA]</scope>
    <source>
        <tissue>Leaf</tissue>
    </source>
</reference>
<organism>
    <name type="scientific">Rosa canina</name>
    <name type="common">Dog rose</name>
    <dbReference type="NCBI Taxonomy" id="74635"/>
    <lineage>
        <taxon>Eukaryota</taxon>
        <taxon>Viridiplantae</taxon>
        <taxon>Streptophyta</taxon>
        <taxon>Embryophyta</taxon>
        <taxon>Tracheophyta</taxon>
        <taxon>Spermatophyta</taxon>
        <taxon>Magnoliopsida</taxon>
        <taxon>eudicotyledons</taxon>
        <taxon>Gunneridae</taxon>
        <taxon>Pentapetalae</taxon>
        <taxon>rosids</taxon>
        <taxon>fabids</taxon>
        <taxon>Rosales</taxon>
        <taxon>Rosaceae</taxon>
        <taxon>Rosoideae</taxon>
        <taxon>Rosoideae incertae sedis</taxon>
        <taxon>Rosa</taxon>
    </lineage>
</organism>